<sequence>MNKPRYFKEAFAQLKPYEPHLVSYEIKLDANENPYLFPKSLLEEIFSKIGTRDFPLYPDPLAGRLRIRLSEKLGVLPENIVLGNGSDELILCLYLAFGGYGRIALSFSPSFVMYRHHAFVTQTEFFEVSYRDDFSLDLDETKKAIEKYQPHLVFLANPNNPTGTLVDIETIKKLLAYDHLLVVDEAYVEFSGVSAIDLLKKYQNLVILRTFSKARALAGLRLGYLVASVDVVKEIIKVKNPYNVNVFSQIAGEVVLANEEVFQGEIKEIVAERERLYNQLASLGLKPVKSHANFILVEFGEKAKKIHQELINHGILVRYLGGALANYLRITVGTPEENRQLLKKLGEIL</sequence>
<comment type="catalytic activity">
    <reaction evidence="1">
        <text>L-histidinol phosphate + 2-oxoglutarate = 3-(imidazol-4-yl)-2-oxopropyl phosphate + L-glutamate</text>
        <dbReference type="Rhea" id="RHEA:23744"/>
        <dbReference type="ChEBI" id="CHEBI:16810"/>
        <dbReference type="ChEBI" id="CHEBI:29985"/>
        <dbReference type="ChEBI" id="CHEBI:57766"/>
        <dbReference type="ChEBI" id="CHEBI:57980"/>
        <dbReference type="EC" id="2.6.1.9"/>
    </reaction>
</comment>
<comment type="cofactor">
    <cofactor evidence="1">
        <name>pyridoxal 5'-phosphate</name>
        <dbReference type="ChEBI" id="CHEBI:597326"/>
    </cofactor>
</comment>
<comment type="pathway">
    <text evidence="1">Amino-acid biosynthesis; L-histidine biosynthesis; L-histidine from 5-phospho-alpha-D-ribose 1-diphosphate: step 7/9.</text>
</comment>
<comment type="subunit">
    <text evidence="1">Homodimer.</text>
</comment>
<comment type="similarity">
    <text evidence="1">Belongs to the class-II pyridoxal-phosphate-dependent aminotransferase family. Histidinol-phosphate aminotransferase subfamily.</text>
</comment>
<keyword id="KW-0028">Amino-acid biosynthesis</keyword>
<keyword id="KW-0032">Aminotransferase</keyword>
<keyword id="KW-0368">Histidine biosynthesis</keyword>
<keyword id="KW-0663">Pyridoxal phosphate</keyword>
<keyword id="KW-1185">Reference proteome</keyword>
<keyword id="KW-0808">Transferase</keyword>
<proteinExistence type="inferred from homology"/>
<protein>
    <recommendedName>
        <fullName evidence="1">Histidinol-phosphate aminotransferase 1</fullName>
        <ecNumber evidence="1">2.6.1.9</ecNumber>
    </recommendedName>
    <alternativeName>
        <fullName evidence="1">Imidazole acetol-phosphate transaminase 1</fullName>
    </alternativeName>
</protein>
<accession>Q3AD52</accession>
<gene>
    <name evidence="1" type="primary">hisC1</name>
    <name type="ordered locus">CHY_1086</name>
</gene>
<evidence type="ECO:0000255" key="1">
    <source>
        <dbReference type="HAMAP-Rule" id="MF_01023"/>
    </source>
</evidence>
<name>HIS81_CARHZ</name>
<reference key="1">
    <citation type="journal article" date="2005" name="PLoS Genet.">
        <title>Life in hot carbon monoxide: the complete genome sequence of Carboxydothermus hydrogenoformans Z-2901.</title>
        <authorList>
            <person name="Wu M."/>
            <person name="Ren Q."/>
            <person name="Durkin A.S."/>
            <person name="Daugherty S.C."/>
            <person name="Brinkac L.M."/>
            <person name="Dodson R.J."/>
            <person name="Madupu R."/>
            <person name="Sullivan S.A."/>
            <person name="Kolonay J.F."/>
            <person name="Nelson W.C."/>
            <person name="Tallon L.J."/>
            <person name="Jones K.M."/>
            <person name="Ulrich L.E."/>
            <person name="Gonzalez J.M."/>
            <person name="Zhulin I.B."/>
            <person name="Robb F.T."/>
            <person name="Eisen J.A."/>
        </authorList>
    </citation>
    <scope>NUCLEOTIDE SEQUENCE [LARGE SCALE GENOMIC DNA]</scope>
    <source>
        <strain>ATCC BAA-161 / DSM 6008 / Z-2901</strain>
    </source>
</reference>
<organism>
    <name type="scientific">Carboxydothermus hydrogenoformans (strain ATCC BAA-161 / DSM 6008 / Z-2901)</name>
    <dbReference type="NCBI Taxonomy" id="246194"/>
    <lineage>
        <taxon>Bacteria</taxon>
        <taxon>Bacillati</taxon>
        <taxon>Bacillota</taxon>
        <taxon>Clostridia</taxon>
        <taxon>Thermoanaerobacterales</taxon>
        <taxon>Thermoanaerobacteraceae</taxon>
        <taxon>Carboxydothermus</taxon>
    </lineage>
</organism>
<dbReference type="EC" id="2.6.1.9" evidence="1"/>
<dbReference type="EMBL" id="CP000141">
    <property type="protein sequence ID" value="ABB15291.1"/>
    <property type="molecule type" value="Genomic_DNA"/>
</dbReference>
<dbReference type="RefSeq" id="WP_011344008.1">
    <property type="nucleotide sequence ID" value="NC_007503.1"/>
</dbReference>
<dbReference type="SMR" id="Q3AD52"/>
<dbReference type="STRING" id="246194.CHY_1086"/>
<dbReference type="KEGG" id="chy:CHY_1086"/>
<dbReference type="eggNOG" id="COG0079">
    <property type="taxonomic scope" value="Bacteria"/>
</dbReference>
<dbReference type="HOGENOM" id="CLU_017584_3_1_9"/>
<dbReference type="InParanoid" id="Q3AD52"/>
<dbReference type="OrthoDB" id="9813612at2"/>
<dbReference type="UniPathway" id="UPA00031">
    <property type="reaction ID" value="UER00012"/>
</dbReference>
<dbReference type="Proteomes" id="UP000002706">
    <property type="component" value="Chromosome"/>
</dbReference>
<dbReference type="GO" id="GO:0004400">
    <property type="term" value="F:histidinol-phosphate transaminase activity"/>
    <property type="evidence" value="ECO:0007669"/>
    <property type="project" value="UniProtKB-UniRule"/>
</dbReference>
<dbReference type="GO" id="GO:0030170">
    <property type="term" value="F:pyridoxal phosphate binding"/>
    <property type="evidence" value="ECO:0007669"/>
    <property type="project" value="InterPro"/>
</dbReference>
<dbReference type="GO" id="GO:0000105">
    <property type="term" value="P:L-histidine biosynthetic process"/>
    <property type="evidence" value="ECO:0007669"/>
    <property type="project" value="UniProtKB-UniRule"/>
</dbReference>
<dbReference type="CDD" id="cd00609">
    <property type="entry name" value="AAT_like"/>
    <property type="match status" value="1"/>
</dbReference>
<dbReference type="Gene3D" id="3.90.1150.10">
    <property type="entry name" value="Aspartate Aminotransferase, domain 1"/>
    <property type="match status" value="1"/>
</dbReference>
<dbReference type="Gene3D" id="3.40.640.10">
    <property type="entry name" value="Type I PLP-dependent aspartate aminotransferase-like (Major domain)"/>
    <property type="match status" value="1"/>
</dbReference>
<dbReference type="HAMAP" id="MF_01023">
    <property type="entry name" value="HisC_aminotrans_2"/>
    <property type="match status" value="1"/>
</dbReference>
<dbReference type="InterPro" id="IPR001917">
    <property type="entry name" value="Aminotrans_II_pyridoxalP_BS"/>
</dbReference>
<dbReference type="InterPro" id="IPR004839">
    <property type="entry name" value="Aminotransferase_I/II_large"/>
</dbReference>
<dbReference type="InterPro" id="IPR005861">
    <property type="entry name" value="HisP_aminotrans"/>
</dbReference>
<dbReference type="InterPro" id="IPR015424">
    <property type="entry name" value="PyrdxlP-dep_Trfase"/>
</dbReference>
<dbReference type="InterPro" id="IPR015421">
    <property type="entry name" value="PyrdxlP-dep_Trfase_major"/>
</dbReference>
<dbReference type="InterPro" id="IPR015422">
    <property type="entry name" value="PyrdxlP-dep_Trfase_small"/>
</dbReference>
<dbReference type="NCBIfam" id="TIGR01141">
    <property type="entry name" value="hisC"/>
    <property type="match status" value="1"/>
</dbReference>
<dbReference type="PANTHER" id="PTHR42885:SF2">
    <property type="entry name" value="HISTIDINOL-PHOSPHATE AMINOTRANSFERASE"/>
    <property type="match status" value="1"/>
</dbReference>
<dbReference type="PANTHER" id="PTHR42885">
    <property type="entry name" value="HISTIDINOL-PHOSPHATE AMINOTRANSFERASE-RELATED"/>
    <property type="match status" value="1"/>
</dbReference>
<dbReference type="Pfam" id="PF00155">
    <property type="entry name" value="Aminotran_1_2"/>
    <property type="match status" value="1"/>
</dbReference>
<dbReference type="SUPFAM" id="SSF53383">
    <property type="entry name" value="PLP-dependent transferases"/>
    <property type="match status" value="1"/>
</dbReference>
<dbReference type="PROSITE" id="PS00599">
    <property type="entry name" value="AA_TRANSFER_CLASS_2"/>
    <property type="match status" value="1"/>
</dbReference>
<feature type="chain" id="PRO_0000230211" description="Histidinol-phosphate aminotransferase 1">
    <location>
        <begin position="1"/>
        <end position="349"/>
    </location>
</feature>
<feature type="modified residue" description="N6-(pyridoxal phosphate)lysine" evidence="1">
    <location>
        <position position="213"/>
    </location>
</feature>